<evidence type="ECO:0000255" key="1">
    <source>
        <dbReference type="HAMAP-Rule" id="MF_02015"/>
    </source>
</evidence>
<keyword id="KW-0131">Cell cycle</keyword>
<keyword id="KW-0132">Cell division</keyword>
<keyword id="KW-0963">Cytoplasm</keyword>
<keyword id="KW-0238">DNA-binding</keyword>
<keyword id="KW-0717">Septation</keyword>
<accession>B1HPM0</accession>
<dbReference type="EMBL" id="CP000817">
    <property type="protein sequence ID" value="ACA42222.1"/>
    <property type="molecule type" value="Genomic_DNA"/>
</dbReference>
<dbReference type="RefSeq" id="WP_012296220.1">
    <property type="nucleotide sequence ID" value="NC_010382.1"/>
</dbReference>
<dbReference type="SMR" id="B1HPM0"/>
<dbReference type="EnsemblBacteria" id="ACA42222">
    <property type="protein sequence ID" value="ACA42222"/>
    <property type="gene ID" value="Bsph_4778"/>
</dbReference>
<dbReference type="KEGG" id="lsp:Bsph_4778"/>
<dbReference type="HOGENOM" id="CLU_023853_0_1_9"/>
<dbReference type="Proteomes" id="UP000002164">
    <property type="component" value="Chromosome"/>
</dbReference>
<dbReference type="GO" id="GO:0005694">
    <property type="term" value="C:chromosome"/>
    <property type="evidence" value="ECO:0007669"/>
    <property type="project" value="TreeGrafter"/>
</dbReference>
<dbReference type="GO" id="GO:0005737">
    <property type="term" value="C:cytoplasm"/>
    <property type="evidence" value="ECO:0007669"/>
    <property type="project" value="UniProtKB-UniRule"/>
</dbReference>
<dbReference type="GO" id="GO:0009295">
    <property type="term" value="C:nucleoid"/>
    <property type="evidence" value="ECO:0007669"/>
    <property type="project" value="UniProtKB-SubCell"/>
</dbReference>
<dbReference type="GO" id="GO:0003677">
    <property type="term" value="F:DNA binding"/>
    <property type="evidence" value="ECO:0007669"/>
    <property type="project" value="UniProtKB-UniRule"/>
</dbReference>
<dbReference type="GO" id="GO:0007059">
    <property type="term" value="P:chromosome segregation"/>
    <property type="evidence" value="ECO:0007669"/>
    <property type="project" value="TreeGrafter"/>
</dbReference>
<dbReference type="GO" id="GO:0000917">
    <property type="term" value="P:division septum assembly"/>
    <property type="evidence" value="ECO:0007669"/>
    <property type="project" value="UniProtKB-KW"/>
</dbReference>
<dbReference type="GO" id="GO:0045881">
    <property type="term" value="P:positive regulation of sporulation resulting in formation of a cellular spore"/>
    <property type="evidence" value="ECO:0007669"/>
    <property type="project" value="TreeGrafter"/>
</dbReference>
<dbReference type="CDD" id="cd16393">
    <property type="entry name" value="SPO0J_N"/>
    <property type="match status" value="1"/>
</dbReference>
<dbReference type="FunFam" id="1.10.10.2830:FF:000001">
    <property type="entry name" value="Chromosome partitioning protein ParB"/>
    <property type="match status" value="1"/>
</dbReference>
<dbReference type="FunFam" id="3.90.1530.30:FF:000001">
    <property type="entry name" value="Chromosome partitioning protein ParB"/>
    <property type="match status" value="1"/>
</dbReference>
<dbReference type="Gene3D" id="1.10.10.2830">
    <property type="match status" value="1"/>
</dbReference>
<dbReference type="Gene3D" id="3.90.1530.30">
    <property type="match status" value="1"/>
</dbReference>
<dbReference type="HAMAP" id="MF_02015">
    <property type="entry name" value="ParB_Noc"/>
    <property type="match status" value="1"/>
</dbReference>
<dbReference type="InterPro" id="IPR050336">
    <property type="entry name" value="Chromosome_partition/occlusion"/>
</dbReference>
<dbReference type="InterPro" id="IPR041468">
    <property type="entry name" value="HTH_ParB/Spo0J"/>
</dbReference>
<dbReference type="InterPro" id="IPR023705">
    <property type="entry name" value="Nucleoid_occlusion_protein"/>
</dbReference>
<dbReference type="InterPro" id="IPR004437">
    <property type="entry name" value="ParB/RepB/Spo0J"/>
</dbReference>
<dbReference type="InterPro" id="IPR003115">
    <property type="entry name" value="ParB/Sulfiredoxin_dom"/>
</dbReference>
<dbReference type="InterPro" id="IPR036086">
    <property type="entry name" value="ParB/Sulfiredoxin_sf"/>
</dbReference>
<dbReference type="NCBIfam" id="TIGR04285">
    <property type="entry name" value="nucleoid_noc"/>
    <property type="match status" value="1"/>
</dbReference>
<dbReference type="NCBIfam" id="TIGR00180">
    <property type="entry name" value="parB_part"/>
    <property type="match status" value="1"/>
</dbReference>
<dbReference type="PANTHER" id="PTHR33375">
    <property type="entry name" value="CHROMOSOME-PARTITIONING PROTEIN PARB-RELATED"/>
    <property type="match status" value="1"/>
</dbReference>
<dbReference type="PANTHER" id="PTHR33375:SF8">
    <property type="entry name" value="NUCLEOID OCCLUSION PROTEIN"/>
    <property type="match status" value="1"/>
</dbReference>
<dbReference type="Pfam" id="PF17762">
    <property type="entry name" value="HTH_ParB"/>
    <property type="match status" value="1"/>
</dbReference>
<dbReference type="Pfam" id="PF02195">
    <property type="entry name" value="ParBc"/>
    <property type="match status" value="1"/>
</dbReference>
<dbReference type="SMART" id="SM00470">
    <property type="entry name" value="ParB"/>
    <property type="match status" value="1"/>
</dbReference>
<dbReference type="SUPFAM" id="SSF109709">
    <property type="entry name" value="KorB DNA-binding domain-like"/>
    <property type="match status" value="1"/>
</dbReference>
<dbReference type="SUPFAM" id="SSF110849">
    <property type="entry name" value="ParB/Sulfiredoxin"/>
    <property type="match status" value="1"/>
</dbReference>
<comment type="function">
    <text evidence="1">Effects nucleoid occlusion by binding relatively nonspecifically to DNA and preventing the assembly of the division machinery in the vicinity of the nucleoid, especially under conditions that disturb the cell cycle. It helps to coordinate cell division and chromosome segregation by preventing the formation of the Z ring through the nucleoid, which would cause chromosome breakage.</text>
</comment>
<comment type="subcellular location">
    <subcellularLocation>
        <location evidence="1">Cytoplasm</location>
        <location evidence="1">Nucleoid</location>
    </subcellularLocation>
</comment>
<comment type="similarity">
    <text evidence="1">Belongs to the ParB family.</text>
</comment>
<proteinExistence type="inferred from homology"/>
<gene>
    <name evidence="1" type="primary">noc</name>
    <name type="ordered locus">Bsph_4778</name>
</gene>
<feature type="chain" id="PRO_0000346635" description="Nucleoid occlusion protein">
    <location>
        <begin position="1"/>
        <end position="298"/>
    </location>
</feature>
<feature type="DNA-binding region" description="H-T-H motif" evidence="1">
    <location>
        <begin position="152"/>
        <end position="171"/>
    </location>
</feature>
<organism>
    <name type="scientific">Lysinibacillus sphaericus (strain C3-41)</name>
    <dbReference type="NCBI Taxonomy" id="444177"/>
    <lineage>
        <taxon>Bacteria</taxon>
        <taxon>Bacillati</taxon>
        <taxon>Bacillota</taxon>
        <taxon>Bacilli</taxon>
        <taxon>Bacillales</taxon>
        <taxon>Bacillaceae</taxon>
        <taxon>Lysinibacillus</taxon>
    </lineage>
</organism>
<name>NOC_LYSSC</name>
<reference key="1">
    <citation type="journal article" date="2008" name="J. Bacteriol.">
        <title>Complete genome sequence of the mosquitocidal bacterium Bacillus sphaericus C3-41 and comparison with those of closely related Bacillus species.</title>
        <authorList>
            <person name="Hu X."/>
            <person name="Fan W."/>
            <person name="Han B."/>
            <person name="Liu H."/>
            <person name="Zheng D."/>
            <person name="Li Q."/>
            <person name="Dong W."/>
            <person name="Yan J."/>
            <person name="Gao M."/>
            <person name="Berry C."/>
            <person name="Yuan Z."/>
        </authorList>
    </citation>
    <scope>NUCLEOTIDE SEQUENCE [LARGE SCALE GENOMIC DNA]</scope>
    <source>
        <strain>C3-41</strain>
    </source>
</reference>
<sequence length="298" mass="34201">MKSPFSRFFGGGSKTEPIVKNEVEQAEAVHTAEEVIKLPIDQIVPNRFQPRTIFDDEKIEELSRTIHTHGVIQPIVVRKTSENQYEIIAGERRYRAMKKLQWTEVPAIVRNLTDKETASIALIENLQREELTAIEEAVAYQKLLELHELTQEALAQRLGKGQSTVANKLRLLRLPDEVQQAILQRKISERHARALIAIKDQPLQLEVLQQTVDNDWNVRQLEEQIQAILHPVTDEQESVPKKAKPKRKAISKDVRIALNTIKQSLTMVTKSGITVKTEEEDTEEYYQITVKIPKKKKV</sequence>
<protein>
    <recommendedName>
        <fullName evidence="1">Nucleoid occlusion protein</fullName>
        <shortName evidence="1">Noc</shortName>
    </recommendedName>
</protein>